<evidence type="ECO:0000255" key="1">
    <source>
        <dbReference type="HAMAP-Rule" id="MF_00203"/>
    </source>
</evidence>
<evidence type="ECO:0000256" key="2">
    <source>
        <dbReference type="SAM" id="MobiDB-lite"/>
    </source>
</evidence>
<feature type="chain" id="PRO_0000264861" description="UvrABC system protein C">
    <location>
        <begin position="1"/>
        <end position="607"/>
    </location>
</feature>
<feature type="domain" description="GIY-YIG" evidence="1">
    <location>
        <begin position="15"/>
        <end position="93"/>
    </location>
</feature>
<feature type="domain" description="UVR" evidence="1">
    <location>
        <begin position="203"/>
        <end position="238"/>
    </location>
</feature>
<feature type="region of interest" description="Disordered" evidence="2">
    <location>
        <begin position="542"/>
        <end position="561"/>
    </location>
</feature>
<feature type="compositionally biased region" description="Basic residues" evidence="2">
    <location>
        <begin position="542"/>
        <end position="551"/>
    </location>
</feature>
<proteinExistence type="inferred from homology"/>
<reference key="1">
    <citation type="journal article" date="2006" name="Nat. Biotechnol.">
        <title>Genome sequence of the ubiquitous hydrocarbon-degrading marine bacterium Alcanivorax borkumensis.</title>
        <authorList>
            <person name="Schneiker S."/>
            <person name="Martins dos Santos V.A.P."/>
            <person name="Bartels D."/>
            <person name="Bekel T."/>
            <person name="Brecht M."/>
            <person name="Buhrmester J."/>
            <person name="Chernikova T.N."/>
            <person name="Denaro R."/>
            <person name="Ferrer M."/>
            <person name="Gertler C."/>
            <person name="Goesmann A."/>
            <person name="Golyshina O.V."/>
            <person name="Kaminski F."/>
            <person name="Khachane A.N."/>
            <person name="Lang S."/>
            <person name="Linke B."/>
            <person name="McHardy A.C."/>
            <person name="Meyer F."/>
            <person name="Nechitaylo T."/>
            <person name="Puehler A."/>
            <person name="Regenhardt D."/>
            <person name="Rupp O."/>
            <person name="Sabirova J.S."/>
            <person name="Selbitschka W."/>
            <person name="Yakimov M.M."/>
            <person name="Timmis K.N."/>
            <person name="Vorhoelter F.-J."/>
            <person name="Weidner S."/>
            <person name="Kaiser O."/>
            <person name="Golyshin P.N."/>
        </authorList>
    </citation>
    <scope>NUCLEOTIDE SEQUENCE [LARGE SCALE GENOMIC DNA]</scope>
    <source>
        <strain>ATCC 700651 / DSM 11573 / NCIMB 13689 / SK2</strain>
    </source>
</reference>
<organism>
    <name type="scientific">Alcanivorax borkumensis (strain ATCC 700651 / DSM 11573 / NCIMB 13689 / SK2)</name>
    <dbReference type="NCBI Taxonomy" id="393595"/>
    <lineage>
        <taxon>Bacteria</taxon>
        <taxon>Pseudomonadati</taxon>
        <taxon>Pseudomonadota</taxon>
        <taxon>Gammaproteobacteria</taxon>
        <taxon>Oceanospirillales</taxon>
        <taxon>Alcanivoracaceae</taxon>
        <taxon>Alcanivorax</taxon>
    </lineage>
</organism>
<gene>
    <name evidence="1" type="primary">uvrC</name>
    <name type="ordered locus">ABO_1305</name>
</gene>
<name>UVRC_ALCBS</name>
<keyword id="KW-0963">Cytoplasm</keyword>
<keyword id="KW-0227">DNA damage</keyword>
<keyword id="KW-0228">DNA excision</keyword>
<keyword id="KW-0234">DNA repair</keyword>
<keyword id="KW-0267">Excision nuclease</keyword>
<keyword id="KW-1185">Reference proteome</keyword>
<keyword id="KW-0742">SOS response</keyword>
<accession>Q0VPZ5</accession>
<sequence>MSNFDPKHFLLHCARKPGVYRMLDAEGGVLYVGKARNLQARLNSYFQKNVASVKTRALVGRIRDIQTTVTGSEVEALLLEQSLIKELKPPYNILLRDDKSYPYIRITRSDRFPRVTFHRGTRRAGSQYFGPYPSGSAVREALSLIEKIFQVRNCSDSYFRNRTRPCLQHQINRCTAPCVGLVSEEDYARQVTMAADFLDGRSREVADQLSTDMEAAAAALEFEKAALLRDQLAAIQAVQQKQYAETGQGDLDVVAIETRHGLAIIEVLMIRDGRILGHRTFRPDTRGEDDRSEILEAFLSQYYLGDREDPVKPQEILLCMEIPGAEALQQALEEQWAKKVRLAWRVRSDRAAWISMAQTNAQQSMATEMAAREHMEARFLALETLLESSEPIRRIECFDISHTQGEKAVASCVVFDQQGARKQDYRYFNVNPAAGGDDYEALEEAIRRRYQRVLKEQGRMPDLLLIDGGKGQMQRGWKVVQELDLHASIRVMGIGKGPSRRPGFEALYLPCGKEMIPGPADSALHLLQQVRDEAHRFALTGHRARRGKARKQSTLDEIPGIGPKRRKALLTHFGGLKQMRNASASEFARVPGINSQMAQTLYDWFHR</sequence>
<comment type="function">
    <text evidence="1">The UvrABC repair system catalyzes the recognition and processing of DNA lesions. UvrC both incises the 5' and 3' sides of the lesion. The N-terminal half is responsible for the 3' incision and the C-terminal half is responsible for the 5' incision.</text>
</comment>
<comment type="subunit">
    <text evidence="1">Interacts with UvrB in an incision complex.</text>
</comment>
<comment type="subcellular location">
    <subcellularLocation>
        <location evidence="1">Cytoplasm</location>
    </subcellularLocation>
</comment>
<comment type="similarity">
    <text evidence="1">Belongs to the UvrC family.</text>
</comment>
<dbReference type="EMBL" id="AM286690">
    <property type="protein sequence ID" value="CAL16753.1"/>
    <property type="molecule type" value="Genomic_DNA"/>
</dbReference>
<dbReference type="RefSeq" id="WP_011588587.1">
    <property type="nucleotide sequence ID" value="NC_008260.1"/>
</dbReference>
<dbReference type="SMR" id="Q0VPZ5"/>
<dbReference type="STRING" id="393595.ABO_1305"/>
<dbReference type="KEGG" id="abo:ABO_1305"/>
<dbReference type="eggNOG" id="COG0322">
    <property type="taxonomic scope" value="Bacteria"/>
</dbReference>
<dbReference type="HOGENOM" id="CLU_014841_3_0_6"/>
<dbReference type="OrthoDB" id="9804933at2"/>
<dbReference type="Proteomes" id="UP000008871">
    <property type="component" value="Chromosome"/>
</dbReference>
<dbReference type="GO" id="GO:0005737">
    <property type="term" value="C:cytoplasm"/>
    <property type="evidence" value="ECO:0007669"/>
    <property type="project" value="UniProtKB-SubCell"/>
</dbReference>
<dbReference type="GO" id="GO:0009380">
    <property type="term" value="C:excinuclease repair complex"/>
    <property type="evidence" value="ECO:0007669"/>
    <property type="project" value="InterPro"/>
</dbReference>
<dbReference type="GO" id="GO:0003677">
    <property type="term" value="F:DNA binding"/>
    <property type="evidence" value="ECO:0007669"/>
    <property type="project" value="UniProtKB-UniRule"/>
</dbReference>
<dbReference type="GO" id="GO:0009381">
    <property type="term" value="F:excinuclease ABC activity"/>
    <property type="evidence" value="ECO:0007669"/>
    <property type="project" value="UniProtKB-UniRule"/>
</dbReference>
<dbReference type="GO" id="GO:0006289">
    <property type="term" value="P:nucleotide-excision repair"/>
    <property type="evidence" value="ECO:0007669"/>
    <property type="project" value="UniProtKB-UniRule"/>
</dbReference>
<dbReference type="GO" id="GO:0009432">
    <property type="term" value="P:SOS response"/>
    <property type="evidence" value="ECO:0007669"/>
    <property type="project" value="UniProtKB-UniRule"/>
</dbReference>
<dbReference type="CDD" id="cd10434">
    <property type="entry name" value="GIY-YIG_UvrC_Cho"/>
    <property type="match status" value="1"/>
</dbReference>
<dbReference type="FunFam" id="1.10.150.20:FF:000005">
    <property type="entry name" value="UvrABC system protein C"/>
    <property type="match status" value="1"/>
</dbReference>
<dbReference type="FunFam" id="3.30.420.340:FF:000001">
    <property type="entry name" value="UvrABC system protein C"/>
    <property type="match status" value="1"/>
</dbReference>
<dbReference type="FunFam" id="3.40.1440.10:FF:000001">
    <property type="entry name" value="UvrABC system protein C"/>
    <property type="match status" value="1"/>
</dbReference>
<dbReference type="Gene3D" id="1.10.150.20">
    <property type="entry name" value="5' to 3' exonuclease, C-terminal subdomain"/>
    <property type="match status" value="1"/>
</dbReference>
<dbReference type="Gene3D" id="3.40.1440.10">
    <property type="entry name" value="GIY-YIG endonuclease"/>
    <property type="match status" value="1"/>
</dbReference>
<dbReference type="Gene3D" id="4.10.860.10">
    <property type="entry name" value="UVR domain"/>
    <property type="match status" value="1"/>
</dbReference>
<dbReference type="Gene3D" id="3.30.420.340">
    <property type="entry name" value="UvrC, RNAse H endonuclease domain"/>
    <property type="match status" value="1"/>
</dbReference>
<dbReference type="HAMAP" id="MF_00203">
    <property type="entry name" value="UvrC"/>
    <property type="match status" value="1"/>
</dbReference>
<dbReference type="InterPro" id="IPR000305">
    <property type="entry name" value="GIY-YIG_endonuc"/>
</dbReference>
<dbReference type="InterPro" id="IPR035901">
    <property type="entry name" value="GIY-YIG_endonuc_sf"/>
</dbReference>
<dbReference type="InterPro" id="IPR047296">
    <property type="entry name" value="GIY-YIG_UvrC_Cho"/>
</dbReference>
<dbReference type="InterPro" id="IPR003583">
    <property type="entry name" value="Hlx-hairpin-Hlx_DNA-bd_motif"/>
</dbReference>
<dbReference type="InterPro" id="IPR010994">
    <property type="entry name" value="RuvA_2-like"/>
</dbReference>
<dbReference type="InterPro" id="IPR001943">
    <property type="entry name" value="UVR_dom"/>
</dbReference>
<dbReference type="InterPro" id="IPR036876">
    <property type="entry name" value="UVR_dom_sf"/>
</dbReference>
<dbReference type="InterPro" id="IPR050066">
    <property type="entry name" value="UvrABC_protein_C"/>
</dbReference>
<dbReference type="InterPro" id="IPR004791">
    <property type="entry name" value="UvrC"/>
</dbReference>
<dbReference type="InterPro" id="IPR001162">
    <property type="entry name" value="UvrC_RNase_H_dom"/>
</dbReference>
<dbReference type="InterPro" id="IPR038476">
    <property type="entry name" value="UvrC_RNase_H_dom_sf"/>
</dbReference>
<dbReference type="NCBIfam" id="NF001824">
    <property type="entry name" value="PRK00558.1-5"/>
    <property type="match status" value="1"/>
</dbReference>
<dbReference type="NCBIfam" id="TIGR00194">
    <property type="entry name" value="uvrC"/>
    <property type="match status" value="1"/>
</dbReference>
<dbReference type="PANTHER" id="PTHR30562:SF1">
    <property type="entry name" value="UVRABC SYSTEM PROTEIN C"/>
    <property type="match status" value="1"/>
</dbReference>
<dbReference type="PANTHER" id="PTHR30562">
    <property type="entry name" value="UVRC/OXIDOREDUCTASE"/>
    <property type="match status" value="1"/>
</dbReference>
<dbReference type="Pfam" id="PF01541">
    <property type="entry name" value="GIY-YIG"/>
    <property type="match status" value="1"/>
</dbReference>
<dbReference type="Pfam" id="PF14520">
    <property type="entry name" value="HHH_5"/>
    <property type="match status" value="1"/>
</dbReference>
<dbReference type="Pfam" id="PF02151">
    <property type="entry name" value="UVR"/>
    <property type="match status" value="1"/>
</dbReference>
<dbReference type="Pfam" id="PF22920">
    <property type="entry name" value="UvrC_RNaseH"/>
    <property type="match status" value="1"/>
</dbReference>
<dbReference type="Pfam" id="PF08459">
    <property type="entry name" value="UvrC_RNaseH_dom"/>
    <property type="match status" value="1"/>
</dbReference>
<dbReference type="SMART" id="SM00465">
    <property type="entry name" value="GIYc"/>
    <property type="match status" value="1"/>
</dbReference>
<dbReference type="SMART" id="SM00278">
    <property type="entry name" value="HhH1"/>
    <property type="match status" value="2"/>
</dbReference>
<dbReference type="SUPFAM" id="SSF46600">
    <property type="entry name" value="C-terminal UvrC-binding domain of UvrB"/>
    <property type="match status" value="1"/>
</dbReference>
<dbReference type="SUPFAM" id="SSF82771">
    <property type="entry name" value="GIY-YIG endonuclease"/>
    <property type="match status" value="1"/>
</dbReference>
<dbReference type="SUPFAM" id="SSF47781">
    <property type="entry name" value="RuvA domain 2-like"/>
    <property type="match status" value="1"/>
</dbReference>
<dbReference type="PROSITE" id="PS50164">
    <property type="entry name" value="GIY_YIG"/>
    <property type="match status" value="1"/>
</dbReference>
<dbReference type="PROSITE" id="PS50151">
    <property type="entry name" value="UVR"/>
    <property type="match status" value="1"/>
</dbReference>
<dbReference type="PROSITE" id="PS50165">
    <property type="entry name" value="UVRC"/>
    <property type="match status" value="1"/>
</dbReference>
<protein>
    <recommendedName>
        <fullName evidence="1">UvrABC system protein C</fullName>
        <shortName evidence="1">Protein UvrC</shortName>
    </recommendedName>
    <alternativeName>
        <fullName evidence="1">Excinuclease ABC subunit C</fullName>
    </alternativeName>
</protein>